<evidence type="ECO:0000250" key="1"/>
<evidence type="ECO:0000256" key="2">
    <source>
        <dbReference type="SAM" id="MobiDB-lite"/>
    </source>
</evidence>
<evidence type="ECO:0000305" key="3"/>
<feature type="chain" id="PRO_0000177658" description="Peptide chain release factor 1">
    <location>
        <begin position="1"/>
        <end position="359"/>
    </location>
</feature>
<feature type="region of interest" description="Disordered" evidence="2">
    <location>
        <begin position="287"/>
        <end position="312"/>
    </location>
</feature>
<feature type="modified residue" description="N5-methylglutamine" evidence="1">
    <location>
        <position position="235"/>
    </location>
</feature>
<organism>
    <name type="scientific">Chlamydia trachomatis serovar D (strain ATCC VR-885 / DSM 19411 / UW-3/Cx)</name>
    <dbReference type="NCBI Taxonomy" id="272561"/>
    <lineage>
        <taxon>Bacteria</taxon>
        <taxon>Pseudomonadati</taxon>
        <taxon>Chlamydiota</taxon>
        <taxon>Chlamydiia</taxon>
        <taxon>Chlamydiales</taxon>
        <taxon>Chlamydiaceae</taxon>
        <taxon>Chlamydia/Chlamydophila group</taxon>
        <taxon>Chlamydia</taxon>
    </lineage>
</organism>
<gene>
    <name type="primary">prfA</name>
    <name type="ordered locus">CT_023</name>
</gene>
<keyword id="KW-0963">Cytoplasm</keyword>
<keyword id="KW-0488">Methylation</keyword>
<keyword id="KW-0648">Protein biosynthesis</keyword>
<keyword id="KW-1185">Reference proteome</keyword>
<protein>
    <recommendedName>
        <fullName>Peptide chain release factor 1</fullName>
        <shortName>RF-1</shortName>
    </recommendedName>
</protein>
<name>RF1_CHLTR</name>
<reference key="1">
    <citation type="journal article" date="1998" name="Science">
        <title>Genome sequence of an obligate intracellular pathogen of humans: Chlamydia trachomatis.</title>
        <authorList>
            <person name="Stephens R.S."/>
            <person name="Kalman S."/>
            <person name="Lammel C.J."/>
            <person name="Fan J."/>
            <person name="Marathe R."/>
            <person name="Aravind L."/>
            <person name="Mitchell W.P."/>
            <person name="Olinger L."/>
            <person name="Tatusov R.L."/>
            <person name="Zhao Q."/>
            <person name="Koonin E.V."/>
            <person name="Davis R.W."/>
        </authorList>
    </citation>
    <scope>NUCLEOTIDE SEQUENCE [LARGE SCALE GENOMIC DNA]</scope>
    <source>
        <strain>ATCC VR-885 / DSM 19411 / UW-3/Cx</strain>
    </source>
</reference>
<sequence>MEIKVLECLKRLEEVEKQISDPNIFSNPKEYSSLSKEHARLSEIKNAHESLVATKKILQDDKLALSTEKDPEIVAMLEEGVLVGEEAVERLSKQLENLLIPPDPDDDLSVIMELRAGTGGDEAALFVGDCVRMYHLYAASKGWQCEVLSTSESDLGGYKEYVMGISGASVKRFLQYEAGTHRVQRVPETETQGRVHTSAVTVAVLPEPAEDDEEVFIDEKDLRIDTFRSSGAGGQHVNVTDSAVRITHIPSGVVVTCQDERSQHKNKAKAMRVLKARIRDAEVQKRAQEASAMRSAQVGSGDRSERIRTYNFPQNRVTDHRIGLTLYNLDRVMEGELDMITTALVTHVHRQLFGHEETA</sequence>
<accession>O84026</accession>
<proteinExistence type="inferred from homology"/>
<comment type="function">
    <text evidence="1">Peptide chain release factor 1 directs the termination of translation in response to the peptide chain termination codons UAG and UAA.</text>
</comment>
<comment type="subcellular location">
    <subcellularLocation>
        <location evidence="1">Cytoplasm</location>
    </subcellularLocation>
</comment>
<comment type="PTM">
    <text evidence="1">Methylated by PrmC. Methylation increases the termination efficiency of RF1 (By similarity).</text>
</comment>
<comment type="similarity">
    <text evidence="3">Belongs to the prokaryotic/mitochondrial release factor family.</text>
</comment>
<dbReference type="EMBL" id="AE001273">
    <property type="protein sequence ID" value="AAC67613.1"/>
    <property type="molecule type" value="Genomic_DNA"/>
</dbReference>
<dbReference type="PIR" id="B71566">
    <property type="entry name" value="B71566"/>
</dbReference>
<dbReference type="RefSeq" id="NP_219525.1">
    <property type="nucleotide sequence ID" value="NC_000117.1"/>
</dbReference>
<dbReference type="RefSeq" id="WP_009871370.1">
    <property type="nucleotide sequence ID" value="NC_000117.1"/>
</dbReference>
<dbReference type="SMR" id="O84026"/>
<dbReference type="FunCoup" id="O84026">
    <property type="interactions" value="245"/>
</dbReference>
<dbReference type="STRING" id="272561.CT_023"/>
<dbReference type="EnsemblBacteria" id="AAC67613">
    <property type="protein sequence ID" value="AAC67613"/>
    <property type="gene ID" value="CT_023"/>
</dbReference>
<dbReference type="GeneID" id="884175"/>
<dbReference type="KEGG" id="ctr:CT_023"/>
<dbReference type="PATRIC" id="fig|272561.5.peg.28"/>
<dbReference type="HOGENOM" id="CLU_036856_0_1_0"/>
<dbReference type="InParanoid" id="O84026"/>
<dbReference type="OrthoDB" id="9806673at2"/>
<dbReference type="Proteomes" id="UP000000431">
    <property type="component" value="Chromosome"/>
</dbReference>
<dbReference type="GO" id="GO:0005737">
    <property type="term" value="C:cytoplasm"/>
    <property type="evidence" value="ECO:0007669"/>
    <property type="project" value="UniProtKB-SubCell"/>
</dbReference>
<dbReference type="GO" id="GO:0016149">
    <property type="term" value="F:translation release factor activity, codon specific"/>
    <property type="evidence" value="ECO:0007669"/>
    <property type="project" value="UniProtKB-UniRule"/>
</dbReference>
<dbReference type="FunFam" id="3.30.160.20:FF:000004">
    <property type="entry name" value="Peptide chain release factor 1"/>
    <property type="match status" value="1"/>
</dbReference>
<dbReference type="FunFam" id="3.30.70.1660:FF:000002">
    <property type="entry name" value="Peptide chain release factor 1"/>
    <property type="match status" value="1"/>
</dbReference>
<dbReference type="FunFam" id="3.30.70.1660:FF:000004">
    <property type="entry name" value="Peptide chain release factor 1"/>
    <property type="match status" value="1"/>
</dbReference>
<dbReference type="Gene3D" id="3.30.160.20">
    <property type="match status" value="1"/>
</dbReference>
<dbReference type="Gene3D" id="3.30.70.1660">
    <property type="match status" value="1"/>
</dbReference>
<dbReference type="Gene3D" id="6.10.140.1950">
    <property type="match status" value="1"/>
</dbReference>
<dbReference type="HAMAP" id="MF_00093">
    <property type="entry name" value="Rel_fac_1"/>
    <property type="match status" value="1"/>
</dbReference>
<dbReference type="InterPro" id="IPR005139">
    <property type="entry name" value="PCRF"/>
</dbReference>
<dbReference type="InterPro" id="IPR000352">
    <property type="entry name" value="Pep_chain_release_fac_I"/>
</dbReference>
<dbReference type="InterPro" id="IPR045853">
    <property type="entry name" value="Pep_chain_release_fac_I_sf"/>
</dbReference>
<dbReference type="InterPro" id="IPR050057">
    <property type="entry name" value="Prokaryotic/Mito_RF"/>
</dbReference>
<dbReference type="InterPro" id="IPR004373">
    <property type="entry name" value="RF-1"/>
</dbReference>
<dbReference type="NCBIfam" id="TIGR00019">
    <property type="entry name" value="prfA"/>
    <property type="match status" value="1"/>
</dbReference>
<dbReference type="NCBIfam" id="NF001859">
    <property type="entry name" value="PRK00591.1"/>
    <property type="match status" value="1"/>
</dbReference>
<dbReference type="PANTHER" id="PTHR43804">
    <property type="entry name" value="LD18447P"/>
    <property type="match status" value="1"/>
</dbReference>
<dbReference type="PANTHER" id="PTHR43804:SF7">
    <property type="entry name" value="LD18447P"/>
    <property type="match status" value="1"/>
</dbReference>
<dbReference type="Pfam" id="PF03462">
    <property type="entry name" value="PCRF"/>
    <property type="match status" value="1"/>
</dbReference>
<dbReference type="Pfam" id="PF00472">
    <property type="entry name" value="RF-1"/>
    <property type="match status" value="1"/>
</dbReference>
<dbReference type="SMART" id="SM00937">
    <property type="entry name" value="PCRF"/>
    <property type="match status" value="1"/>
</dbReference>
<dbReference type="SUPFAM" id="SSF75620">
    <property type="entry name" value="Release factor"/>
    <property type="match status" value="1"/>
</dbReference>
<dbReference type="PROSITE" id="PS00745">
    <property type="entry name" value="RF_PROK_I"/>
    <property type="match status" value="1"/>
</dbReference>